<proteinExistence type="evidence at protein level"/>
<feature type="initiator methionine" description="Removed" evidence="2">
    <location>
        <position position="1"/>
    </location>
</feature>
<feature type="chain" id="PRO_0000073759" description="Recoverin">
    <location>
        <begin position="2"/>
        <end position="200"/>
    </location>
</feature>
<feature type="domain" description="EF-hand 1" evidence="5">
    <location>
        <begin position="25"/>
        <end position="60"/>
    </location>
</feature>
<feature type="domain" description="EF-hand 2" evidence="4">
    <location>
        <begin position="61"/>
        <end position="96"/>
    </location>
</feature>
<feature type="domain" description="EF-hand 3" evidence="4">
    <location>
        <begin position="97"/>
        <end position="132"/>
    </location>
</feature>
<feature type="domain" description="EF-hand 4" evidence="4">
    <location>
        <begin position="147"/>
        <end position="182"/>
    </location>
</feature>
<feature type="region of interest" description="Interaction with GRK1" evidence="2">
    <location>
        <begin position="189"/>
        <end position="192"/>
    </location>
</feature>
<feature type="binding site" evidence="2">
    <location>
        <position position="74"/>
    </location>
    <ligand>
        <name>Ca(2+)</name>
        <dbReference type="ChEBI" id="CHEBI:29108"/>
        <label>1</label>
        <note>low affinity</note>
    </ligand>
</feature>
<feature type="binding site" evidence="2">
    <location>
        <position position="76"/>
    </location>
    <ligand>
        <name>Ca(2+)</name>
        <dbReference type="ChEBI" id="CHEBI:29108"/>
        <label>1</label>
        <note>low affinity</note>
    </ligand>
</feature>
<feature type="binding site" evidence="2">
    <location>
        <position position="78"/>
    </location>
    <ligand>
        <name>Ca(2+)</name>
        <dbReference type="ChEBI" id="CHEBI:29108"/>
        <label>1</label>
        <note>low affinity</note>
    </ligand>
</feature>
<feature type="binding site" evidence="2">
    <location>
        <position position="80"/>
    </location>
    <ligand>
        <name>Ca(2+)</name>
        <dbReference type="ChEBI" id="CHEBI:29108"/>
        <label>1</label>
        <note>low affinity</note>
    </ligand>
</feature>
<feature type="binding site" evidence="2">
    <location>
        <position position="85"/>
    </location>
    <ligand>
        <name>Ca(2+)</name>
        <dbReference type="ChEBI" id="CHEBI:29108"/>
        <label>1</label>
        <note>low affinity</note>
    </ligand>
</feature>
<feature type="binding site" evidence="4">
    <location>
        <position position="110"/>
    </location>
    <ligand>
        <name>Ca(2+)</name>
        <dbReference type="ChEBI" id="CHEBI:29108"/>
        <label>2</label>
        <note>high affinity</note>
    </ligand>
</feature>
<feature type="binding site" evidence="4">
    <location>
        <position position="112"/>
    </location>
    <ligand>
        <name>Ca(2+)</name>
        <dbReference type="ChEBI" id="CHEBI:29108"/>
        <label>2</label>
        <note>high affinity</note>
    </ligand>
</feature>
<feature type="binding site" evidence="4">
    <location>
        <position position="114"/>
    </location>
    <ligand>
        <name>Ca(2+)</name>
        <dbReference type="ChEBI" id="CHEBI:29108"/>
        <label>2</label>
        <note>high affinity</note>
    </ligand>
</feature>
<feature type="binding site" evidence="4">
    <location>
        <position position="116"/>
    </location>
    <ligand>
        <name>Ca(2+)</name>
        <dbReference type="ChEBI" id="CHEBI:29108"/>
        <note>high affinity</note>
    </ligand>
</feature>
<feature type="binding site" evidence="4">
    <location>
        <position position="121"/>
    </location>
    <ligand>
        <name>Ca(2+)</name>
        <dbReference type="ChEBI" id="CHEBI:29108"/>
        <label>2</label>
        <note>high affinity</note>
    </ligand>
</feature>
<feature type="site" description="Interaction with GRK1" evidence="2">
    <location>
        <position position="192"/>
    </location>
</feature>
<feature type="modified residue" description="Cysteine sulfenic acid (-SOH)" evidence="2">
    <location>
        <position position="39"/>
    </location>
</feature>
<feature type="lipid moiety-binding region" description="N-myristoyl glycine" evidence="1">
    <location>
        <position position="2"/>
    </location>
</feature>
<feature type="disulfide bond" description="Interchain, redox-active" evidence="2">
    <location>
        <position position="39"/>
    </location>
</feature>
<feature type="helix" evidence="6">
    <location>
        <begin position="11"/>
        <end position="20"/>
    </location>
</feature>
<feature type="helix" evidence="6">
    <location>
        <begin position="25"/>
        <end position="38"/>
    </location>
</feature>
<feature type="strand" evidence="6">
    <location>
        <begin position="42"/>
        <end position="45"/>
    </location>
</feature>
<feature type="helix" evidence="6">
    <location>
        <begin position="46"/>
        <end position="55"/>
    </location>
</feature>
<feature type="helix" evidence="6">
    <location>
        <begin position="63"/>
        <end position="73"/>
    </location>
</feature>
<feature type="strand" evidence="6">
    <location>
        <begin position="79"/>
        <end position="82"/>
    </location>
</feature>
<feature type="helix" evidence="6">
    <location>
        <begin position="83"/>
        <end position="93"/>
    </location>
</feature>
<feature type="strand" evidence="6">
    <location>
        <begin position="96"/>
        <end position="99"/>
    </location>
</feature>
<feature type="helix" evidence="6">
    <location>
        <begin position="102"/>
        <end position="109"/>
    </location>
</feature>
<feature type="strand" evidence="6">
    <location>
        <begin position="114"/>
        <end position="117"/>
    </location>
</feature>
<feature type="helix" evidence="6">
    <location>
        <begin position="119"/>
        <end position="132"/>
    </location>
</feature>
<feature type="helix" evidence="6">
    <location>
        <begin position="135"/>
        <end position="139"/>
    </location>
</feature>
<feature type="turn" evidence="6">
    <location>
        <begin position="143"/>
        <end position="145"/>
    </location>
</feature>
<feature type="helix" evidence="6">
    <location>
        <begin position="148"/>
        <end position="158"/>
    </location>
</feature>
<feature type="helix" evidence="6">
    <location>
        <begin position="169"/>
        <end position="178"/>
    </location>
</feature>
<feature type="helix" evidence="6">
    <location>
        <begin position="180"/>
        <end position="186"/>
    </location>
</feature>
<name>RECO_HUMAN</name>
<organism>
    <name type="scientific">Homo sapiens</name>
    <name type="common">Human</name>
    <dbReference type="NCBI Taxonomy" id="9606"/>
    <lineage>
        <taxon>Eukaryota</taxon>
        <taxon>Metazoa</taxon>
        <taxon>Chordata</taxon>
        <taxon>Craniata</taxon>
        <taxon>Vertebrata</taxon>
        <taxon>Euteleostomi</taxon>
        <taxon>Mammalia</taxon>
        <taxon>Eutheria</taxon>
        <taxon>Euarchontoglires</taxon>
        <taxon>Primates</taxon>
        <taxon>Haplorrhini</taxon>
        <taxon>Catarrhini</taxon>
        <taxon>Hominidae</taxon>
        <taxon>Homo</taxon>
    </lineage>
</organism>
<keyword id="KW-0002">3D-structure</keyword>
<keyword id="KW-0106">Calcium</keyword>
<keyword id="KW-0966">Cell projection</keyword>
<keyword id="KW-0903">Direct protein sequencing</keyword>
<keyword id="KW-1015">Disulfide bond</keyword>
<keyword id="KW-0449">Lipoprotein</keyword>
<keyword id="KW-0472">Membrane</keyword>
<keyword id="KW-0479">Metal-binding</keyword>
<keyword id="KW-0519">Myristate</keyword>
<keyword id="KW-0558">Oxidation</keyword>
<keyword id="KW-1267">Proteomics identification</keyword>
<keyword id="KW-0676">Redox-active center</keyword>
<keyword id="KW-1185">Reference proteome</keyword>
<keyword id="KW-0677">Repeat</keyword>
<keyword id="KW-0716">Sensory transduction</keyword>
<keyword id="KW-0844">Vision</keyword>
<sequence>MGNSKSGALSKEILEELQLNTKFSEEELCSWYQSFLKDCPTGRITQQQFQSIYAKFFPDTDPKAYAQHVFRSFDSNLDGTLDFKEYVIALHMTTAGKTNQKLEWAFSLYDVDGNGTISKNEVLEIVMAIFKMITPEDVKLLPDDENTPEKRAEKIWKYFGKNDDDKLTEKEFIEGTLANKEILRLIQFEPQKVKEKMKNA</sequence>
<gene>
    <name type="primary">RCVRN</name>
    <name type="synonym">RCV1</name>
</gene>
<comment type="function">
    <text evidence="2 3">Acts as a calcium sensor and regulates phototransduction of cone and rod photoreceptor cells (By similarity). Modulates light sensitivity of cone photoreceptor in dark and dim conditions (By similarity). In response to high Ca(2+) levels induced by low light levels, prolongs RHO/rhodopsin activation in rod photoreceptor cells by binding to and inhibiting GRK1-mediated phosphorylation of RHO/rhodopsin (By similarity). Plays a role in scotopic vision/enhances vision in dim light by enhancing signal transfer between rod photoreceptors and rod bipolar cells (By similarity). Improves rod photoreceptor sensitivity in dim light and mediates response of rod photoreceptors to facilitate detection of change and motion in bright light (By similarity).</text>
</comment>
<comment type="subunit">
    <text evidence="2">Homodimer; disulfide-linked (By similarity). Homodimerization is caused by prolonged intense illumination (By similarity). May form a complex composed of RHO, GRK1 and RCVRN in a Ca(2+)-dependent manner; RCVRN prevents the interaction between GRK1 and RHO (By similarity). Interacts (via C-terminus) with GRK1 (via N-terminus); the interaction is Ca(2+)-dependent (By similarity).</text>
</comment>
<comment type="subcellular location">
    <subcellularLocation>
        <location evidence="3">Photoreceptor inner segment</location>
    </subcellularLocation>
    <subcellularLocation>
        <location evidence="3">Cell projection</location>
        <location evidence="3">Cilium</location>
        <location evidence="3">Photoreceptor outer segment</location>
    </subcellularLocation>
    <subcellularLocation>
        <location evidence="2">Photoreceptor outer segment membrane</location>
        <topology evidence="2">Lipid-anchor</topology>
        <orientation evidence="2">Cytoplasmic side</orientation>
    </subcellularLocation>
    <subcellularLocation>
        <location evidence="3">Perikaryon</location>
    </subcellularLocation>
    <text evidence="2 3">Primarily expressed in the inner segments of light-adapted rod photoreceptors, approximately 10% of which translocates from photoreceptor outer segments upon light stimulation (By similarity). Targeting of myristoylated protein to rod photoreceptor outer segments is calcium dependent (By similarity).</text>
</comment>
<comment type="tissue specificity">
    <text>Retina and pineal gland.</text>
</comment>
<comment type="domain">
    <text evidence="2">EF-hand 2 and EF-hand 3 domains are the low-affinity and the high-affinity calcium binding sites, respectively. EF-hand 1 and EF-hand 4 domains do not bind calcium due to substitutions that disrupt their respective Ca(2+) binding loops. The cooperative binding of calcium to the EF-hand 2 domain following EF-hand 3 domain calcium binding requires myristoylation (By similarity). Calcium binding to the 2 EF-hand domains induces exposure of the myristoyl group through a protein conformation change, this process known as the calcium-myristoyl switch facilitates binding to photoreceptor cell membranes (By similarity).</text>
</comment>
<comment type="PTM">
    <text evidence="2">The N-terminal glycine is linked to one of four different types of acyl groups. The most abundant is myristoleate (14:1), but 14:0, 14:2, and 12:0 acyl residues are also present (By similarity). The Ca(2+) induced exposure of the myristoyl group, known as the calcium-myristoyl switch, promotes RCVRN binding to the photoreceptor cell membranes only when intracellular Ca(2+) concentration is high (By similarity).</text>
</comment>
<comment type="PTM">
    <text evidence="2">Oxidation on Cys-39 occurs in response to prolonged intense illumination and results in the formation of disulfide homodimers, and to a lesser extent disulfide-linked heterodimers.</text>
</comment>
<comment type="similarity">
    <text evidence="5">Belongs to the recoverin family.</text>
</comment>
<evidence type="ECO:0000250" key="1"/>
<evidence type="ECO:0000250" key="2">
    <source>
        <dbReference type="UniProtKB" id="P21457"/>
    </source>
</evidence>
<evidence type="ECO:0000250" key="3">
    <source>
        <dbReference type="UniProtKB" id="P34057"/>
    </source>
</evidence>
<evidence type="ECO:0000255" key="4">
    <source>
        <dbReference type="PROSITE-ProRule" id="PRU00448"/>
    </source>
</evidence>
<evidence type="ECO:0000305" key="5"/>
<evidence type="ECO:0007829" key="6">
    <source>
        <dbReference type="PDB" id="2D8N"/>
    </source>
</evidence>
<protein>
    <recommendedName>
        <fullName>Recoverin</fullName>
    </recommendedName>
    <alternativeName>
        <fullName>Cancer-associated retinopathy protein</fullName>
        <shortName>Protein CAR</shortName>
    </alternativeName>
</protein>
<dbReference type="EMBL" id="S43855">
    <property type="protein sequence ID" value="AAB23163.1"/>
    <property type="molecule type" value="mRNA"/>
</dbReference>
<dbReference type="EMBL" id="S45545">
    <property type="protein sequence ID" value="AAB23392.1"/>
    <property type="molecule type" value="mRNA"/>
</dbReference>
<dbReference type="EMBL" id="S62028">
    <property type="protein sequence ID" value="AAB26894.1"/>
    <property type="molecule type" value="mRNA"/>
</dbReference>
<dbReference type="EMBL" id="AB001838">
    <property type="protein sequence ID" value="BAA19460.1"/>
    <property type="molecule type" value="mRNA"/>
</dbReference>
<dbReference type="EMBL" id="BT009838">
    <property type="protein sequence ID" value="AAP88840.1"/>
    <property type="molecule type" value="mRNA"/>
</dbReference>
<dbReference type="EMBL" id="AK314129">
    <property type="protein sequence ID" value="BAG36819.1"/>
    <property type="molecule type" value="mRNA"/>
</dbReference>
<dbReference type="EMBL" id="AB593156">
    <property type="protein sequence ID" value="BAJ84088.1"/>
    <property type="molecule type" value="mRNA"/>
</dbReference>
<dbReference type="EMBL" id="CH471108">
    <property type="protein sequence ID" value="EAW90014.1"/>
    <property type="molecule type" value="Genomic_DNA"/>
</dbReference>
<dbReference type="EMBL" id="BC001720">
    <property type="protein sequence ID" value="AAH01720.1"/>
    <property type="molecule type" value="mRNA"/>
</dbReference>
<dbReference type="CCDS" id="CCDS11151.1"/>
<dbReference type="PIR" id="JC1227">
    <property type="entry name" value="JC1227"/>
</dbReference>
<dbReference type="RefSeq" id="NP_002894.1">
    <property type="nucleotide sequence ID" value="NM_002903.3"/>
</dbReference>
<dbReference type="PDB" id="2D8N">
    <property type="method" value="X-ray"/>
    <property type="resolution" value="2.20 A"/>
    <property type="chains" value="A=1-200"/>
</dbReference>
<dbReference type="PDBsum" id="2D8N"/>
<dbReference type="SMR" id="P35243"/>
<dbReference type="BioGRID" id="111890">
    <property type="interactions" value="18"/>
</dbReference>
<dbReference type="FunCoup" id="P35243">
    <property type="interactions" value="58"/>
</dbReference>
<dbReference type="IntAct" id="P35243">
    <property type="interactions" value="12"/>
</dbReference>
<dbReference type="STRING" id="9606.ENSP00000226193"/>
<dbReference type="DrugBank" id="DB08231">
    <property type="generic name" value="Myristic acid"/>
</dbReference>
<dbReference type="TCDB" id="8.A.82.2.7">
    <property type="family name" value="the calmodulin calcium binding protein (calmodulin) family"/>
</dbReference>
<dbReference type="GlyGen" id="P35243">
    <property type="glycosylation" value="8 sites"/>
</dbReference>
<dbReference type="iPTMnet" id="P35243"/>
<dbReference type="PhosphoSitePlus" id="P35243"/>
<dbReference type="BioMuta" id="RCVRN"/>
<dbReference type="DMDM" id="464600"/>
<dbReference type="jPOST" id="P35243"/>
<dbReference type="MassIVE" id="P35243"/>
<dbReference type="PaxDb" id="9606-ENSP00000226193"/>
<dbReference type="PeptideAtlas" id="P35243"/>
<dbReference type="ProteomicsDB" id="55010"/>
<dbReference type="Antibodypedia" id="12699">
    <property type="antibodies" value="522 antibodies from 33 providers"/>
</dbReference>
<dbReference type="DNASU" id="5957"/>
<dbReference type="Ensembl" id="ENST00000226193.6">
    <property type="protein sequence ID" value="ENSP00000226193.5"/>
    <property type="gene ID" value="ENSG00000109047.8"/>
</dbReference>
<dbReference type="GeneID" id="5957"/>
<dbReference type="KEGG" id="hsa:5957"/>
<dbReference type="MANE-Select" id="ENST00000226193.6">
    <property type="protein sequence ID" value="ENSP00000226193.5"/>
    <property type="RefSeq nucleotide sequence ID" value="NM_002903.3"/>
    <property type="RefSeq protein sequence ID" value="NP_002894.1"/>
</dbReference>
<dbReference type="UCSC" id="uc002gme.2">
    <property type="organism name" value="human"/>
</dbReference>
<dbReference type="AGR" id="HGNC:9937"/>
<dbReference type="CTD" id="5957"/>
<dbReference type="DisGeNET" id="5957"/>
<dbReference type="GeneCards" id="RCVRN"/>
<dbReference type="HGNC" id="HGNC:9937">
    <property type="gene designation" value="RCVRN"/>
</dbReference>
<dbReference type="HPA" id="ENSG00000109047">
    <property type="expression patterns" value="Tissue enriched (retina)"/>
</dbReference>
<dbReference type="MalaCards" id="RCVRN"/>
<dbReference type="MIM" id="179618">
    <property type="type" value="gene"/>
</dbReference>
<dbReference type="neXtProt" id="NX_P35243"/>
<dbReference type="OpenTargets" id="ENSG00000109047"/>
<dbReference type="PharmGKB" id="PA162400987"/>
<dbReference type="VEuPathDB" id="HostDB:ENSG00000109047"/>
<dbReference type="eggNOG" id="KOG0044">
    <property type="taxonomic scope" value="Eukaryota"/>
</dbReference>
<dbReference type="GeneTree" id="ENSGT00940000159441"/>
<dbReference type="HOGENOM" id="CLU_072366_1_0_1"/>
<dbReference type="InParanoid" id="P35243"/>
<dbReference type="OMA" id="WEFFGKK"/>
<dbReference type="OrthoDB" id="191686at2759"/>
<dbReference type="PAN-GO" id="P35243">
    <property type="GO annotations" value="1 GO annotation based on evolutionary models"/>
</dbReference>
<dbReference type="PhylomeDB" id="P35243"/>
<dbReference type="TreeFam" id="TF300009"/>
<dbReference type="PathwayCommons" id="P35243"/>
<dbReference type="Reactome" id="R-HSA-2514859">
    <property type="pathway name" value="Inactivation, recovery and regulation of the phototransduction cascade"/>
</dbReference>
<dbReference type="SignaLink" id="P35243"/>
<dbReference type="BioGRID-ORCS" id="5957">
    <property type="hits" value="11 hits in 1150 CRISPR screens"/>
</dbReference>
<dbReference type="ChiTaRS" id="RCVRN">
    <property type="organism name" value="human"/>
</dbReference>
<dbReference type="EvolutionaryTrace" id="P35243"/>
<dbReference type="GenomeRNAi" id="5957"/>
<dbReference type="Pharos" id="P35243">
    <property type="development level" value="Tbio"/>
</dbReference>
<dbReference type="PRO" id="PR:P35243"/>
<dbReference type="Proteomes" id="UP000005640">
    <property type="component" value="Chromosome 17"/>
</dbReference>
<dbReference type="RNAct" id="P35243">
    <property type="molecule type" value="protein"/>
</dbReference>
<dbReference type="Bgee" id="ENSG00000109047">
    <property type="expression patterns" value="Expressed in male germ line stem cell (sensu Vertebrata) in testis and 115 other cell types or tissues"/>
</dbReference>
<dbReference type="GO" id="GO:0030425">
    <property type="term" value="C:dendrite"/>
    <property type="evidence" value="ECO:0007669"/>
    <property type="project" value="Ensembl"/>
</dbReference>
<dbReference type="GO" id="GO:0016020">
    <property type="term" value="C:membrane"/>
    <property type="evidence" value="ECO:0007669"/>
    <property type="project" value="UniProtKB-KW"/>
</dbReference>
<dbReference type="GO" id="GO:0043204">
    <property type="term" value="C:perikaryon"/>
    <property type="evidence" value="ECO:0007669"/>
    <property type="project" value="UniProtKB-SubCell"/>
</dbReference>
<dbReference type="GO" id="GO:0001917">
    <property type="term" value="C:photoreceptor inner segment"/>
    <property type="evidence" value="ECO:0007669"/>
    <property type="project" value="UniProtKB-SubCell"/>
</dbReference>
<dbReference type="GO" id="GO:0001750">
    <property type="term" value="C:photoreceptor outer segment"/>
    <property type="evidence" value="ECO:0007669"/>
    <property type="project" value="UniProtKB-SubCell"/>
</dbReference>
<dbReference type="GO" id="GO:0005509">
    <property type="term" value="F:calcium ion binding"/>
    <property type="evidence" value="ECO:0000318"/>
    <property type="project" value="GO_Central"/>
</dbReference>
<dbReference type="GO" id="GO:0008048">
    <property type="term" value="F:calcium sensitive guanylate cyclase activator activity"/>
    <property type="evidence" value="ECO:0000304"/>
    <property type="project" value="ProtInc"/>
</dbReference>
<dbReference type="GO" id="GO:0007602">
    <property type="term" value="P:phototransduction"/>
    <property type="evidence" value="ECO:0007669"/>
    <property type="project" value="Ensembl"/>
</dbReference>
<dbReference type="GO" id="GO:0051924">
    <property type="term" value="P:regulation of calcium ion transport"/>
    <property type="evidence" value="ECO:0007669"/>
    <property type="project" value="Ensembl"/>
</dbReference>
<dbReference type="GO" id="GO:0009966">
    <property type="term" value="P:regulation of signal transduction"/>
    <property type="evidence" value="ECO:0000318"/>
    <property type="project" value="GO_Central"/>
</dbReference>
<dbReference type="GO" id="GO:0007165">
    <property type="term" value="P:signal transduction"/>
    <property type="evidence" value="ECO:0000304"/>
    <property type="project" value="ProtInc"/>
</dbReference>
<dbReference type="GO" id="GO:0007601">
    <property type="term" value="P:visual perception"/>
    <property type="evidence" value="ECO:0000304"/>
    <property type="project" value="ProtInc"/>
</dbReference>
<dbReference type="CDD" id="cd00051">
    <property type="entry name" value="EFh"/>
    <property type="match status" value="2"/>
</dbReference>
<dbReference type="FunFam" id="1.10.238.10:FF:000009">
    <property type="entry name" value="Visinin-like protein 1"/>
    <property type="match status" value="1"/>
</dbReference>
<dbReference type="Gene3D" id="1.10.238.10">
    <property type="entry name" value="EF-hand"/>
    <property type="match status" value="2"/>
</dbReference>
<dbReference type="InterPro" id="IPR011992">
    <property type="entry name" value="EF-hand-dom_pair"/>
</dbReference>
<dbReference type="InterPro" id="IPR018247">
    <property type="entry name" value="EF_Hand_1_Ca_BS"/>
</dbReference>
<dbReference type="InterPro" id="IPR002048">
    <property type="entry name" value="EF_hand_dom"/>
</dbReference>
<dbReference type="InterPro" id="IPR028846">
    <property type="entry name" value="Recoverin"/>
</dbReference>
<dbReference type="PANTHER" id="PTHR23055">
    <property type="entry name" value="CALCIUM BINDING PROTEINS"/>
    <property type="match status" value="1"/>
</dbReference>
<dbReference type="PANTHER" id="PTHR23055:SF20">
    <property type="entry name" value="RECOVERIN"/>
    <property type="match status" value="1"/>
</dbReference>
<dbReference type="Pfam" id="PF13499">
    <property type="entry name" value="EF-hand_7"/>
    <property type="match status" value="1"/>
</dbReference>
<dbReference type="Pfam" id="PF13833">
    <property type="entry name" value="EF-hand_8"/>
    <property type="match status" value="1"/>
</dbReference>
<dbReference type="PRINTS" id="PR00450">
    <property type="entry name" value="RECOVERIN"/>
</dbReference>
<dbReference type="SMART" id="SM00054">
    <property type="entry name" value="EFh"/>
    <property type="match status" value="3"/>
</dbReference>
<dbReference type="SUPFAM" id="SSF47473">
    <property type="entry name" value="EF-hand"/>
    <property type="match status" value="1"/>
</dbReference>
<dbReference type="PROSITE" id="PS00018">
    <property type="entry name" value="EF_HAND_1"/>
    <property type="match status" value="1"/>
</dbReference>
<dbReference type="PROSITE" id="PS50222">
    <property type="entry name" value="EF_HAND_2"/>
    <property type="match status" value="3"/>
</dbReference>
<reference key="1">
    <citation type="journal article" date="1992" name="Biochem. Biophys. Res. Commun.">
        <title>Isolation of human retinal genes: recoverin cDNA and gene.</title>
        <authorList>
            <person name="Murakami A."/>
            <person name="Yajima T."/>
            <person name="Inana G."/>
        </authorList>
    </citation>
    <scope>NUCLEOTIDE SEQUENCE [MRNA]</scope>
    <source>
        <tissue>Retina</tissue>
    </source>
</reference>
<reference key="2">
    <citation type="journal article" date="1993" name="Exp. Eye Res.">
        <title>Molecular cloning and nucleotide sequence of a cDNA encoding recoverin from human retina.</title>
        <authorList>
            <person name="Wiechmann A.F."/>
            <person name="Hammarback J.A."/>
        </authorList>
    </citation>
    <scope>NUCLEOTIDE SEQUENCE [MRNA]</scope>
    <source>
        <tissue>Retina</tissue>
    </source>
</reference>
<reference key="3">
    <citation type="journal article" date="1992" name="Invest. Ophthalmol. Vis. Sci.">
        <title>The cancer-associated retinopathy antigen is a recoverin-like protein.</title>
        <authorList>
            <person name="Thirkill C.E."/>
            <person name="Tait R.C."/>
            <person name="Tyler N.K."/>
            <person name="Roth A.M."/>
            <person name="Keltner J.L."/>
        </authorList>
    </citation>
    <scope>NUCLEOTIDE SEQUENCE [MRNA]</scope>
</reference>
<reference key="4">
    <citation type="journal article" date="1996" name="Br. J. Cancer">
        <title>Expression of a photoreceptor protein, recoverin, as a cancer-associated retinopathy autoantigen in human lung cancer cell lines.</title>
        <authorList>
            <person name="Matsubara S."/>
            <person name="Yamaji Y."/>
            <person name="Sato M."/>
            <person name="Fujita J."/>
            <person name="Takahara J."/>
        </authorList>
    </citation>
    <scope>NUCLEOTIDE SEQUENCE [MRNA]</scope>
</reference>
<reference key="5">
    <citation type="submission" date="2003-08" db="EMBL/GenBank/DDBJ databases">
        <authorList>
            <person name="Kalnine N."/>
            <person name="Chen X."/>
            <person name="Rolfs A."/>
            <person name="Halleck A."/>
            <person name="Hines L."/>
            <person name="Eisenstein S."/>
            <person name="Koundinya M."/>
            <person name="Raphael J."/>
            <person name="Moreira D."/>
            <person name="Kelley T."/>
            <person name="LaBaer J."/>
            <person name="Lin Y."/>
            <person name="Phelan M."/>
            <person name="Farmer A."/>
        </authorList>
    </citation>
    <scope>NUCLEOTIDE SEQUENCE [LARGE SCALE MRNA]</scope>
</reference>
<reference key="6">
    <citation type="journal article" date="2004" name="Nat. Genet.">
        <title>Complete sequencing and characterization of 21,243 full-length human cDNAs.</title>
        <authorList>
            <person name="Ota T."/>
            <person name="Suzuki Y."/>
            <person name="Nishikawa T."/>
            <person name="Otsuki T."/>
            <person name="Sugiyama T."/>
            <person name="Irie R."/>
            <person name="Wakamatsu A."/>
            <person name="Hayashi K."/>
            <person name="Sato H."/>
            <person name="Nagai K."/>
            <person name="Kimura K."/>
            <person name="Makita H."/>
            <person name="Sekine M."/>
            <person name="Obayashi M."/>
            <person name="Nishi T."/>
            <person name="Shibahara T."/>
            <person name="Tanaka T."/>
            <person name="Ishii S."/>
            <person name="Yamamoto J."/>
            <person name="Saito K."/>
            <person name="Kawai Y."/>
            <person name="Isono Y."/>
            <person name="Nakamura Y."/>
            <person name="Nagahari K."/>
            <person name="Murakami K."/>
            <person name="Yasuda T."/>
            <person name="Iwayanagi T."/>
            <person name="Wagatsuma M."/>
            <person name="Shiratori A."/>
            <person name="Sudo H."/>
            <person name="Hosoiri T."/>
            <person name="Kaku Y."/>
            <person name="Kodaira H."/>
            <person name="Kondo H."/>
            <person name="Sugawara M."/>
            <person name="Takahashi M."/>
            <person name="Kanda K."/>
            <person name="Yokoi T."/>
            <person name="Furuya T."/>
            <person name="Kikkawa E."/>
            <person name="Omura Y."/>
            <person name="Abe K."/>
            <person name="Kamihara K."/>
            <person name="Katsuta N."/>
            <person name="Sato K."/>
            <person name="Tanikawa M."/>
            <person name="Yamazaki M."/>
            <person name="Ninomiya K."/>
            <person name="Ishibashi T."/>
            <person name="Yamashita H."/>
            <person name="Murakawa K."/>
            <person name="Fujimori K."/>
            <person name="Tanai H."/>
            <person name="Kimata M."/>
            <person name="Watanabe M."/>
            <person name="Hiraoka S."/>
            <person name="Chiba Y."/>
            <person name="Ishida S."/>
            <person name="Ono Y."/>
            <person name="Takiguchi S."/>
            <person name="Watanabe S."/>
            <person name="Yosida M."/>
            <person name="Hotuta T."/>
            <person name="Kusano J."/>
            <person name="Kanehori K."/>
            <person name="Takahashi-Fujii A."/>
            <person name="Hara H."/>
            <person name="Tanase T.-O."/>
            <person name="Nomura Y."/>
            <person name="Togiya S."/>
            <person name="Komai F."/>
            <person name="Hara R."/>
            <person name="Takeuchi K."/>
            <person name="Arita M."/>
            <person name="Imose N."/>
            <person name="Musashino K."/>
            <person name="Yuuki H."/>
            <person name="Oshima A."/>
            <person name="Sasaki N."/>
            <person name="Aotsuka S."/>
            <person name="Yoshikawa Y."/>
            <person name="Matsunawa H."/>
            <person name="Ichihara T."/>
            <person name="Shiohata N."/>
            <person name="Sano S."/>
            <person name="Moriya S."/>
            <person name="Momiyama H."/>
            <person name="Satoh N."/>
            <person name="Takami S."/>
            <person name="Terashima Y."/>
            <person name="Suzuki O."/>
            <person name="Nakagawa S."/>
            <person name="Senoh A."/>
            <person name="Mizoguchi H."/>
            <person name="Goto Y."/>
            <person name="Shimizu F."/>
            <person name="Wakebe H."/>
            <person name="Hishigaki H."/>
            <person name="Watanabe T."/>
            <person name="Sugiyama A."/>
            <person name="Takemoto M."/>
            <person name="Kawakami B."/>
            <person name="Yamazaki M."/>
            <person name="Watanabe K."/>
            <person name="Kumagai A."/>
            <person name="Itakura S."/>
            <person name="Fukuzumi Y."/>
            <person name="Fujimori Y."/>
            <person name="Komiyama M."/>
            <person name="Tashiro H."/>
            <person name="Tanigami A."/>
            <person name="Fujiwara T."/>
            <person name="Ono T."/>
            <person name="Yamada K."/>
            <person name="Fujii Y."/>
            <person name="Ozaki K."/>
            <person name="Hirao M."/>
            <person name="Ohmori Y."/>
            <person name="Kawabata A."/>
            <person name="Hikiji T."/>
            <person name="Kobatake N."/>
            <person name="Inagaki H."/>
            <person name="Ikema Y."/>
            <person name="Okamoto S."/>
            <person name="Okitani R."/>
            <person name="Kawakami T."/>
            <person name="Noguchi S."/>
            <person name="Itoh T."/>
            <person name="Shigeta K."/>
            <person name="Senba T."/>
            <person name="Matsumura K."/>
            <person name="Nakajima Y."/>
            <person name="Mizuno T."/>
            <person name="Morinaga M."/>
            <person name="Sasaki M."/>
            <person name="Togashi T."/>
            <person name="Oyama M."/>
            <person name="Hata H."/>
            <person name="Watanabe M."/>
            <person name="Komatsu T."/>
            <person name="Mizushima-Sugano J."/>
            <person name="Satoh T."/>
            <person name="Shirai Y."/>
            <person name="Takahashi Y."/>
            <person name="Nakagawa K."/>
            <person name="Okumura K."/>
            <person name="Nagase T."/>
            <person name="Nomura N."/>
            <person name="Kikuchi H."/>
            <person name="Masuho Y."/>
            <person name="Yamashita R."/>
            <person name="Nakai K."/>
            <person name="Yada T."/>
            <person name="Nakamura Y."/>
            <person name="Ohara O."/>
            <person name="Isogai T."/>
            <person name="Sugano S."/>
        </authorList>
    </citation>
    <scope>NUCLEOTIDE SEQUENCE [LARGE SCALE MRNA]</scope>
    <source>
        <tissue>Subthalamic nucleus</tissue>
    </source>
</reference>
<reference key="7">
    <citation type="journal article" date="2011" name="Invest. Ophthalmol. Vis. Sci.">
        <title>Full-length transcriptome analysis of human retina-derived cell lines ARPE-19 and Y79 using the vector-capping method.</title>
        <authorList>
            <person name="Oshikawa M."/>
            <person name="Tsutsui C."/>
            <person name="Ikegami T."/>
            <person name="Fuchida Y."/>
            <person name="Matsubara M."/>
            <person name="Toyama S."/>
            <person name="Usami R."/>
            <person name="Ohtoko K."/>
            <person name="Kato S."/>
        </authorList>
    </citation>
    <scope>NUCLEOTIDE SEQUENCE [LARGE SCALE MRNA]</scope>
</reference>
<reference key="8">
    <citation type="submission" date="2005-09" db="EMBL/GenBank/DDBJ databases">
        <authorList>
            <person name="Mural R.J."/>
            <person name="Istrail S."/>
            <person name="Sutton G."/>
            <person name="Florea L."/>
            <person name="Halpern A.L."/>
            <person name="Mobarry C.M."/>
            <person name="Lippert R."/>
            <person name="Walenz B."/>
            <person name="Shatkay H."/>
            <person name="Dew I."/>
            <person name="Miller J.R."/>
            <person name="Flanigan M.J."/>
            <person name="Edwards N.J."/>
            <person name="Bolanos R."/>
            <person name="Fasulo D."/>
            <person name="Halldorsson B.V."/>
            <person name="Hannenhalli S."/>
            <person name="Turner R."/>
            <person name="Yooseph S."/>
            <person name="Lu F."/>
            <person name="Nusskern D.R."/>
            <person name="Shue B.C."/>
            <person name="Zheng X.H."/>
            <person name="Zhong F."/>
            <person name="Delcher A.L."/>
            <person name="Huson D.H."/>
            <person name="Kravitz S.A."/>
            <person name="Mouchard L."/>
            <person name="Reinert K."/>
            <person name="Remington K.A."/>
            <person name="Clark A.G."/>
            <person name="Waterman M.S."/>
            <person name="Eichler E.E."/>
            <person name="Adams M.D."/>
            <person name="Hunkapiller M.W."/>
            <person name="Myers E.W."/>
            <person name="Venter J.C."/>
        </authorList>
    </citation>
    <scope>NUCLEOTIDE SEQUENCE [LARGE SCALE GENOMIC DNA]</scope>
</reference>
<reference key="9">
    <citation type="journal article" date="2004" name="Genome Res.">
        <title>The status, quality, and expansion of the NIH full-length cDNA project: the Mammalian Gene Collection (MGC).</title>
        <authorList>
            <consortium name="The MGC Project Team"/>
        </authorList>
    </citation>
    <scope>NUCLEOTIDE SEQUENCE [LARGE SCALE MRNA]</scope>
    <source>
        <tissue>Eye</tissue>
    </source>
</reference>
<reference key="10">
    <citation type="journal article" date="1991" name="J. Cell Biol.">
        <title>A photoreceptor calcium binding protein is recognized by autoantibodies obtained from patients with cancer-associated retinopathy.</title>
        <authorList>
            <person name="Polans A.S."/>
            <person name="Buczylko J."/>
            <person name="Crabb J."/>
            <person name="Palczewski K."/>
        </authorList>
    </citation>
    <scope>PARTIAL PROTEIN SEQUENCE</scope>
</reference>
<reference key="11">
    <citation type="submission" date="2007-02" db="PDB data bank">
        <title>Crystal structure of human recoverin at 2.2 A resolution.</title>
        <authorList>
            <consortium name="RIKEN structural genomics initiative (RSGI)"/>
        </authorList>
    </citation>
    <scope>X-RAY CRYSTALLOGRAPHY (2.2 ANGSTROMS)</scope>
</reference>
<accession>P35243</accession>
<accession>Q53XL0</accession>